<name>DACT2_HUMAN</name>
<dbReference type="EMBL" id="AF318336">
    <property type="protein sequence ID" value="AAL55843.1"/>
    <property type="status" value="ALT_FRAME"/>
    <property type="molecule type" value="mRNA"/>
</dbReference>
<dbReference type="EMBL" id="AL606970">
    <property type="status" value="NOT_ANNOTATED_CDS"/>
    <property type="molecule type" value="Genomic_DNA"/>
</dbReference>
<dbReference type="EMBL" id="BC092498">
    <property type="protein sequence ID" value="AAH92498.1"/>
    <property type="molecule type" value="mRNA"/>
</dbReference>
<dbReference type="EMBL" id="BC111764">
    <property type="protein sequence ID" value="AAI11765.1"/>
    <property type="molecule type" value="mRNA"/>
</dbReference>
<dbReference type="EMBL" id="BC111790">
    <property type="protein sequence ID" value="AAI11791.1"/>
    <property type="status" value="ALT_INIT"/>
    <property type="molecule type" value="mRNA"/>
</dbReference>
<dbReference type="CCDS" id="CCDS47519.1">
    <molecule id="Q5SW24-1"/>
</dbReference>
<dbReference type="CCDS" id="CCDS69241.1">
    <molecule id="Q5SW24-4"/>
</dbReference>
<dbReference type="CCDS" id="CCDS75554.1">
    <molecule id="Q5SW24-2"/>
</dbReference>
<dbReference type="RefSeq" id="NP_001273279.1">
    <molecule id="Q5SW24-2"/>
    <property type="nucleotide sequence ID" value="NM_001286350.2"/>
</dbReference>
<dbReference type="RefSeq" id="NP_001273280.1">
    <molecule id="Q5SW24-4"/>
    <property type="nucleotide sequence ID" value="NM_001286351.2"/>
</dbReference>
<dbReference type="RefSeq" id="NP_999627.2">
    <molecule id="Q5SW24-1"/>
    <property type="nucleotide sequence ID" value="NM_214462.5"/>
</dbReference>
<dbReference type="BioGRID" id="127953">
    <property type="interactions" value="19"/>
</dbReference>
<dbReference type="FunCoup" id="Q5SW24">
    <property type="interactions" value="290"/>
</dbReference>
<dbReference type="IntAct" id="Q5SW24">
    <property type="interactions" value="9"/>
</dbReference>
<dbReference type="STRING" id="9606.ENSP00000355760"/>
<dbReference type="iPTMnet" id="Q5SW24"/>
<dbReference type="PhosphoSitePlus" id="Q5SW24"/>
<dbReference type="BioMuta" id="DACT2"/>
<dbReference type="DMDM" id="74743909"/>
<dbReference type="MassIVE" id="Q5SW24"/>
<dbReference type="PaxDb" id="9606-ENSP00000355760"/>
<dbReference type="PeptideAtlas" id="Q5SW24"/>
<dbReference type="ProteomicsDB" id="63960">
    <molecule id="Q5SW24-1"/>
</dbReference>
<dbReference type="ProteomicsDB" id="63961">
    <molecule id="Q5SW24-2"/>
</dbReference>
<dbReference type="ProteomicsDB" id="63962">
    <molecule id="Q5SW24-3"/>
</dbReference>
<dbReference type="ProteomicsDB" id="63963">
    <molecule id="Q5SW24-4"/>
</dbReference>
<dbReference type="Antibodypedia" id="33560">
    <property type="antibodies" value="65 antibodies from 22 providers"/>
</dbReference>
<dbReference type="DNASU" id="168002"/>
<dbReference type="Ensembl" id="ENST00000366795.4">
    <molecule id="Q5SW24-1"/>
    <property type="protein sequence ID" value="ENSP00000355760.3"/>
    <property type="gene ID" value="ENSG00000164488.12"/>
</dbReference>
<dbReference type="Ensembl" id="ENST00000366796.7">
    <molecule id="Q5SW24-4"/>
    <property type="protein sequence ID" value="ENSP00000355761.2"/>
    <property type="gene ID" value="ENSG00000164488.12"/>
</dbReference>
<dbReference type="Ensembl" id="ENST00000607983.1">
    <molecule id="Q5SW24-3"/>
    <property type="protein sequence ID" value="ENSP00000476434.1"/>
    <property type="gene ID" value="ENSG00000164488.12"/>
</dbReference>
<dbReference type="Ensembl" id="ENST00000610183.1">
    <molecule id="Q5SW24-2"/>
    <property type="protein sequence ID" value="ENSP00000476573.1"/>
    <property type="gene ID" value="ENSG00000164488.12"/>
</dbReference>
<dbReference type="GeneID" id="168002"/>
<dbReference type="KEGG" id="hsa:168002"/>
<dbReference type="MANE-Select" id="ENST00000366795.4">
    <property type="protein sequence ID" value="ENSP00000355760.3"/>
    <property type="RefSeq nucleotide sequence ID" value="NM_214462.5"/>
    <property type="RefSeq protein sequence ID" value="NP_999627.2"/>
</dbReference>
<dbReference type="UCSC" id="uc003qwq.5">
    <molecule id="Q5SW24-1"/>
    <property type="organism name" value="human"/>
</dbReference>
<dbReference type="AGR" id="HGNC:21231"/>
<dbReference type="CTD" id="168002"/>
<dbReference type="DisGeNET" id="168002"/>
<dbReference type="GeneCards" id="DACT2"/>
<dbReference type="HGNC" id="HGNC:21231">
    <property type="gene designation" value="DACT2"/>
</dbReference>
<dbReference type="HPA" id="ENSG00000164488">
    <property type="expression patterns" value="Tissue enhanced (brain, placenta)"/>
</dbReference>
<dbReference type="MIM" id="608966">
    <property type="type" value="gene"/>
</dbReference>
<dbReference type="neXtProt" id="NX_Q5SW24"/>
<dbReference type="OpenTargets" id="ENSG00000164488"/>
<dbReference type="PharmGKB" id="PA134934623"/>
<dbReference type="VEuPathDB" id="HostDB:ENSG00000164488"/>
<dbReference type="eggNOG" id="ENOG502QVT3">
    <property type="taxonomic scope" value="Eukaryota"/>
</dbReference>
<dbReference type="GeneTree" id="ENSGT00950000183181"/>
<dbReference type="HOGENOM" id="CLU_086692_0_0_1"/>
<dbReference type="InParanoid" id="Q5SW24"/>
<dbReference type="OMA" id="GNDVYPY"/>
<dbReference type="PAN-GO" id="Q5SW24">
    <property type="GO annotations" value="2 GO annotations based on evolutionary models"/>
</dbReference>
<dbReference type="PhylomeDB" id="Q5SW24"/>
<dbReference type="TreeFam" id="TF331300"/>
<dbReference type="PathwayCommons" id="Q5SW24"/>
<dbReference type="SignaLink" id="Q5SW24"/>
<dbReference type="SIGNOR" id="Q5SW24"/>
<dbReference type="BioGRID-ORCS" id="168002">
    <property type="hits" value="10 hits in 1143 CRISPR screens"/>
</dbReference>
<dbReference type="GenomeRNAi" id="168002"/>
<dbReference type="Pharos" id="Q5SW24">
    <property type="development level" value="Tbio"/>
</dbReference>
<dbReference type="PRO" id="PR:Q5SW24"/>
<dbReference type="Proteomes" id="UP000005640">
    <property type="component" value="Chromosome 6"/>
</dbReference>
<dbReference type="RNAct" id="Q5SW24">
    <property type="molecule type" value="protein"/>
</dbReference>
<dbReference type="Bgee" id="ENSG00000164488">
    <property type="expression patterns" value="Expressed in placenta and 99 other cell types or tissues"/>
</dbReference>
<dbReference type="GO" id="GO:0005737">
    <property type="term" value="C:cytoplasm"/>
    <property type="evidence" value="ECO:0000318"/>
    <property type="project" value="GO_Central"/>
</dbReference>
<dbReference type="GO" id="GO:0008013">
    <property type="term" value="F:beta-catenin binding"/>
    <property type="evidence" value="ECO:0000250"/>
    <property type="project" value="UniProtKB"/>
</dbReference>
<dbReference type="GO" id="GO:0070097">
    <property type="term" value="F:delta-catenin binding"/>
    <property type="evidence" value="ECO:0000250"/>
    <property type="project" value="UniProtKB"/>
</dbReference>
<dbReference type="GO" id="GO:0051018">
    <property type="term" value="F:protein kinase A binding"/>
    <property type="evidence" value="ECO:0000250"/>
    <property type="project" value="UniProtKB"/>
</dbReference>
<dbReference type="GO" id="GO:0005080">
    <property type="term" value="F:protein kinase C binding"/>
    <property type="evidence" value="ECO:0000250"/>
    <property type="project" value="UniProtKB"/>
</dbReference>
<dbReference type="GO" id="GO:0008134">
    <property type="term" value="F:transcription factor binding"/>
    <property type="evidence" value="ECO:0000250"/>
    <property type="project" value="UniProtKB"/>
</dbReference>
<dbReference type="GO" id="GO:0003382">
    <property type="term" value="P:epithelial cell morphogenesis"/>
    <property type="evidence" value="ECO:0000250"/>
    <property type="project" value="UniProtKB"/>
</dbReference>
<dbReference type="GO" id="GO:0002244">
    <property type="term" value="P:hematopoietic progenitor cell differentiation"/>
    <property type="evidence" value="ECO:0007669"/>
    <property type="project" value="Ensembl"/>
</dbReference>
<dbReference type="GO" id="GO:0072061">
    <property type="term" value="P:inner medullary collecting duct development"/>
    <property type="evidence" value="ECO:0000250"/>
    <property type="project" value="UniProtKB"/>
</dbReference>
<dbReference type="GO" id="GO:0007162">
    <property type="term" value="P:negative regulation of cell adhesion"/>
    <property type="evidence" value="ECO:0000250"/>
    <property type="project" value="UniProtKB"/>
</dbReference>
<dbReference type="GO" id="GO:1900108">
    <property type="term" value="P:negative regulation of nodal signaling pathway"/>
    <property type="evidence" value="ECO:0000250"/>
    <property type="project" value="UniProtKB"/>
</dbReference>
<dbReference type="GO" id="GO:0043588">
    <property type="term" value="P:skin development"/>
    <property type="evidence" value="ECO:0000250"/>
    <property type="project" value="UniProtKB"/>
</dbReference>
<dbReference type="InterPro" id="IPR024843">
    <property type="entry name" value="Dapper"/>
</dbReference>
<dbReference type="PANTHER" id="PTHR15919:SF13">
    <property type="entry name" value="DAPPER HOMOLOG 2"/>
    <property type="match status" value="1"/>
</dbReference>
<dbReference type="PANTHER" id="PTHR15919">
    <property type="entry name" value="DAPPER-RELATED"/>
    <property type="match status" value="1"/>
</dbReference>
<dbReference type="Pfam" id="PF15268">
    <property type="entry name" value="Dapper"/>
    <property type="match status" value="1"/>
</dbReference>
<comment type="function">
    <text evidence="1">Involved in regulation of intracellular signaling pathways during development. Negatively regulates the Nodal signaling pathway, possibly by promoting the lysosomal degradation of Nodal receptors, such as TGFBR1. May be involved in control of the morphogenetic behavior of kidney ureteric bud cells by keeping cells epithelial and restraining their mesenchymal character. May play an inhibitory role in the re-epithelialization of skin wounds by attenuating TGF-beta signaling (By similarity).</text>
</comment>
<comment type="subunit">
    <text evidence="1">Can form homodimers and heterodimers with DACT1 or DACT3. Interacts with CSNK1D, PKA catalytic subunit, PKC-type kinase, CSNK2B, DVL1, DVL2, DVL3, VANGL1, VANGL2, TGFBR1, CTNNB1, CTNND2, CTNND1, LEF1, TCF7, TCF7L1 and HDAC1 (By similarity).</text>
</comment>
<comment type="interaction">
    <interactant intactId="EBI-11994826">
        <id>Q5SW24-3</id>
    </interactant>
    <interactant intactId="EBI-3867333">
        <id>A8MQ03</id>
        <label>CYSRT1</label>
    </interactant>
    <organismsDiffer>false</organismsDiffer>
    <experiments>3</experiments>
</comment>
<comment type="alternative products">
    <event type="alternative splicing"/>
    <isoform>
        <id>Q5SW24-1</id>
        <name>1</name>
        <sequence type="displayed"/>
    </isoform>
    <isoform>
        <id>Q5SW24-2</id>
        <name>2</name>
        <sequence type="described" ref="VSP_032596"/>
    </isoform>
    <isoform>
        <id>Q5SW24-3</id>
        <name>3</name>
        <sequence type="described" ref="VSP_032595"/>
    </isoform>
    <isoform>
        <id>Q5SW24-4</id>
        <name>4</name>
        <sequence type="described" ref="VSP_032597 VSP_032598"/>
    </isoform>
</comment>
<comment type="domain">
    <text evidence="1">The C-terminal PDZ-binding motif may mediate interaction with the PDZ domains of DSH (Dishevelled) family proteins.</text>
</comment>
<comment type="similarity">
    <text evidence="5">Belongs to the dapper family.</text>
</comment>
<comment type="sequence caution" evidence="5">
    <conflict type="erroneous initiation">
        <sequence resource="EMBL-CDS" id="AAI11791"/>
    </conflict>
</comment>
<comment type="sequence caution" evidence="5">
    <conflict type="frameshift">
        <sequence resource="EMBL-CDS" id="AAL55843"/>
    </conflict>
</comment>
<reference key="1">
    <citation type="journal article" date="2004" name="Proc. Natl. Acad. Sci. U.S.A.">
        <title>Large-scale cDNA transfection screening for genes related to cancer development and progression.</title>
        <authorList>
            <person name="Wan D."/>
            <person name="Gong Y."/>
            <person name="Qin W."/>
            <person name="Zhang P."/>
            <person name="Li J."/>
            <person name="Wei L."/>
            <person name="Zhou X."/>
            <person name="Li H."/>
            <person name="Qiu X."/>
            <person name="Zhong F."/>
            <person name="He L."/>
            <person name="Yu J."/>
            <person name="Yao G."/>
            <person name="Jiang H."/>
            <person name="Qian L."/>
            <person name="Yu Y."/>
            <person name="Shu H."/>
            <person name="Chen X."/>
            <person name="Xu H."/>
            <person name="Guo M."/>
            <person name="Pan Z."/>
            <person name="Chen Y."/>
            <person name="Ge C."/>
            <person name="Yang S."/>
            <person name="Gu J."/>
        </authorList>
    </citation>
    <scope>NUCLEOTIDE SEQUENCE [LARGE SCALE MRNA] (ISOFORM 1)</scope>
</reference>
<reference key="2">
    <citation type="journal article" date="2003" name="Nature">
        <title>The DNA sequence and analysis of human chromosome 6.</title>
        <authorList>
            <person name="Mungall A.J."/>
            <person name="Palmer S.A."/>
            <person name="Sims S.K."/>
            <person name="Edwards C.A."/>
            <person name="Ashurst J.L."/>
            <person name="Wilming L."/>
            <person name="Jones M.C."/>
            <person name="Horton R."/>
            <person name="Hunt S.E."/>
            <person name="Scott C.E."/>
            <person name="Gilbert J.G.R."/>
            <person name="Clamp M.E."/>
            <person name="Bethel G."/>
            <person name="Milne S."/>
            <person name="Ainscough R."/>
            <person name="Almeida J.P."/>
            <person name="Ambrose K.D."/>
            <person name="Andrews T.D."/>
            <person name="Ashwell R.I.S."/>
            <person name="Babbage A.K."/>
            <person name="Bagguley C.L."/>
            <person name="Bailey J."/>
            <person name="Banerjee R."/>
            <person name="Barker D.J."/>
            <person name="Barlow K.F."/>
            <person name="Bates K."/>
            <person name="Beare D.M."/>
            <person name="Beasley H."/>
            <person name="Beasley O."/>
            <person name="Bird C.P."/>
            <person name="Blakey S.E."/>
            <person name="Bray-Allen S."/>
            <person name="Brook J."/>
            <person name="Brown A.J."/>
            <person name="Brown J.Y."/>
            <person name="Burford D.C."/>
            <person name="Burrill W."/>
            <person name="Burton J."/>
            <person name="Carder C."/>
            <person name="Carter N.P."/>
            <person name="Chapman J.C."/>
            <person name="Clark S.Y."/>
            <person name="Clark G."/>
            <person name="Clee C.M."/>
            <person name="Clegg S."/>
            <person name="Cobley V."/>
            <person name="Collier R.E."/>
            <person name="Collins J.E."/>
            <person name="Colman L.K."/>
            <person name="Corby N.R."/>
            <person name="Coville G.J."/>
            <person name="Culley K.M."/>
            <person name="Dhami P."/>
            <person name="Davies J."/>
            <person name="Dunn M."/>
            <person name="Earthrowl M.E."/>
            <person name="Ellington A.E."/>
            <person name="Evans K.A."/>
            <person name="Faulkner L."/>
            <person name="Francis M.D."/>
            <person name="Frankish A."/>
            <person name="Frankland J."/>
            <person name="French L."/>
            <person name="Garner P."/>
            <person name="Garnett J."/>
            <person name="Ghori M.J."/>
            <person name="Gilby L.M."/>
            <person name="Gillson C.J."/>
            <person name="Glithero R.J."/>
            <person name="Grafham D.V."/>
            <person name="Grant M."/>
            <person name="Gribble S."/>
            <person name="Griffiths C."/>
            <person name="Griffiths M.N.D."/>
            <person name="Hall R."/>
            <person name="Halls K.S."/>
            <person name="Hammond S."/>
            <person name="Harley J.L."/>
            <person name="Hart E.A."/>
            <person name="Heath P.D."/>
            <person name="Heathcott R."/>
            <person name="Holmes S.J."/>
            <person name="Howden P.J."/>
            <person name="Howe K.L."/>
            <person name="Howell G.R."/>
            <person name="Huckle E."/>
            <person name="Humphray S.J."/>
            <person name="Humphries M.D."/>
            <person name="Hunt A.R."/>
            <person name="Johnson C.M."/>
            <person name="Joy A.A."/>
            <person name="Kay M."/>
            <person name="Keenan S.J."/>
            <person name="Kimberley A.M."/>
            <person name="King A."/>
            <person name="Laird G.K."/>
            <person name="Langford C."/>
            <person name="Lawlor S."/>
            <person name="Leongamornlert D.A."/>
            <person name="Leversha M."/>
            <person name="Lloyd C.R."/>
            <person name="Lloyd D.M."/>
            <person name="Loveland J.E."/>
            <person name="Lovell J."/>
            <person name="Martin S."/>
            <person name="Mashreghi-Mohammadi M."/>
            <person name="Maslen G.L."/>
            <person name="Matthews L."/>
            <person name="McCann O.T."/>
            <person name="McLaren S.J."/>
            <person name="McLay K."/>
            <person name="McMurray A."/>
            <person name="Moore M.J.F."/>
            <person name="Mullikin J.C."/>
            <person name="Niblett D."/>
            <person name="Nickerson T."/>
            <person name="Novik K.L."/>
            <person name="Oliver K."/>
            <person name="Overton-Larty E.K."/>
            <person name="Parker A."/>
            <person name="Patel R."/>
            <person name="Pearce A.V."/>
            <person name="Peck A.I."/>
            <person name="Phillimore B.J.C.T."/>
            <person name="Phillips S."/>
            <person name="Plumb R.W."/>
            <person name="Porter K.M."/>
            <person name="Ramsey Y."/>
            <person name="Ranby S.A."/>
            <person name="Rice C.M."/>
            <person name="Ross M.T."/>
            <person name="Searle S.M."/>
            <person name="Sehra H.K."/>
            <person name="Sheridan E."/>
            <person name="Skuce C.D."/>
            <person name="Smith S."/>
            <person name="Smith M."/>
            <person name="Spraggon L."/>
            <person name="Squares S.L."/>
            <person name="Steward C.A."/>
            <person name="Sycamore N."/>
            <person name="Tamlyn-Hall G."/>
            <person name="Tester J."/>
            <person name="Theaker A.J."/>
            <person name="Thomas D.W."/>
            <person name="Thorpe A."/>
            <person name="Tracey A."/>
            <person name="Tromans A."/>
            <person name="Tubby B."/>
            <person name="Wall M."/>
            <person name="Wallis J.M."/>
            <person name="West A.P."/>
            <person name="White S.S."/>
            <person name="Whitehead S.L."/>
            <person name="Whittaker H."/>
            <person name="Wild A."/>
            <person name="Willey D.J."/>
            <person name="Wilmer T.E."/>
            <person name="Wood J.M."/>
            <person name="Wray P.W."/>
            <person name="Wyatt J.C."/>
            <person name="Young L."/>
            <person name="Younger R.M."/>
            <person name="Bentley D.R."/>
            <person name="Coulson A."/>
            <person name="Durbin R.M."/>
            <person name="Hubbard T."/>
            <person name="Sulston J.E."/>
            <person name="Dunham I."/>
            <person name="Rogers J."/>
            <person name="Beck S."/>
        </authorList>
    </citation>
    <scope>NUCLEOTIDE SEQUENCE [LARGE SCALE GENOMIC DNA]</scope>
</reference>
<reference key="3">
    <citation type="journal article" date="2004" name="Genome Res.">
        <title>The status, quality, and expansion of the NIH full-length cDNA project: the Mammalian Gene Collection (MGC).</title>
        <authorList>
            <consortium name="The MGC Project Team"/>
        </authorList>
    </citation>
    <scope>NUCLEOTIDE SEQUENCE [LARGE SCALE MRNA] (ISOFORMS 2; 3 AND 4)</scope>
    <source>
        <tissue>Placenta</tissue>
    </source>
</reference>
<protein>
    <recommendedName>
        <fullName>Dapper homolog 2</fullName>
    </recommendedName>
    <alternativeName>
        <fullName>Dapper antagonist of catenin 2</fullName>
    </alternativeName>
</protein>
<organism>
    <name type="scientific">Homo sapiens</name>
    <name type="common">Human</name>
    <dbReference type="NCBI Taxonomy" id="9606"/>
    <lineage>
        <taxon>Eukaryota</taxon>
        <taxon>Metazoa</taxon>
        <taxon>Chordata</taxon>
        <taxon>Craniata</taxon>
        <taxon>Vertebrata</taxon>
        <taxon>Euteleostomi</taxon>
        <taxon>Mammalia</taxon>
        <taxon>Eutheria</taxon>
        <taxon>Euarchontoglires</taxon>
        <taxon>Primates</taxon>
        <taxon>Haplorrhini</taxon>
        <taxon>Catarrhini</taxon>
        <taxon>Hominidae</taxon>
        <taxon>Homo</taxon>
    </lineage>
</organism>
<feature type="chain" id="PRO_0000326199" description="Dapper homolog 2">
    <location>
        <begin position="1"/>
        <end position="774"/>
    </location>
</feature>
<feature type="region of interest" description="Disordered" evidence="3">
    <location>
        <begin position="188"/>
        <end position="225"/>
    </location>
</feature>
<feature type="region of interest" description="Disordered" evidence="3">
    <location>
        <begin position="295"/>
        <end position="319"/>
    </location>
</feature>
<feature type="region of interest" description="Disordered" evidence="3">
    <location>
        <begin position="345"/>
        <end position="500"/>
    </location>
</feature>
<feature type="region of interest" description="Disordered" evidence="3">
    <location>
        <begin position="624"/>
        <end position="710"/>
    </location>
</feature>
<feature type="coiled-coil region" evidence="2">
    <location>
        <begin position="67"/>
        <end position="93"/>
    </location>
</feature>
<feature type="short sequence motif" description="PDZ-binding" evidence="1">
    <location>
        <begin position="771"/>
        <end position="774"/>
    </location>
</feature>
<feature type="compositionally biased region" description="Polar residues" evidence="3">
    <location>
        <begin position="438"/>
        <end position="452"/>
    </location>
</feature>
<feature type="compositionally biased region" description="Low complexity" evidence="3">
    <location>
        <begin position="637"/>
        <end position="648"/>
    </location>
</feature>
<feature type="compositionally biased region" description="Basic and acidic residues" evidence="3">
    <location>
        <begin position="655"/>
        <end position="672"/>
    </location>
</feature>
<feature type="compositionally biased region" description="Basic and acidic residues" evidence="3">
    <location>
        <begin position="686"/>
        <end position="700"/>
    </location>
</feature>
<feature type="splice variant" id="VSP_032595" description="In isoform 3." evidence="4">
    <location>
        <begin position="1"/>
        <end position="408"/>
    </location>
</feature>
<feature type="splice variant" id="VSP_032596" description="In isoform 2." evidence="4">
    <location>
        <begin position="1"/>
        <end position="170"/>
    </location>
</feature>
<feature type="splice variant" id="VSP_032597" description="In isoform 4." evidence="4">
    <original>GDLDRALPADTGLQKASADAELLGLLCQGVDIPLHVPDPKYRQDLVSQGGREVYPYPSPLH</original>
    <variation>ELCNAPGELDMHAPPAGCTSSSLTGVGSGLRGKCGLCGCQLPFCSVNTSSKTKSSGISRQQ</variation>
    <location>
        <begin position="220"/>
        <end position="280"/>
    </location>
</feature>
<feature type="splice variant" id="VSP_032598" description="In isoform 4." evidence="4">
    <location>
        <begin position="281"/>
        <end position="774"/>
    </location>
</feature>
<feature type="sequence variant" id="VAR_059969" description="In dbSNP:rs6925614.">
    <original>E</original>
    <variation>G</variation>
    <location>
        <position position="351"/>
    </location>
</feature>
<feature type="sequence variant" id="VAR_059970" description="In dbSNP:rs10945501.">
    <original>T</original>
    <variation>P</variation>
    <location>
        <position position="541"/>
    </location>
</feature>
<feature type="sequence conflict" description="In Ref. 3; AAH92498." evidence="5" ref="3">
    <original>S</original>
    <variation>F</variation>
    <location>
        <position position="138"/>
    </location>
</feature>
<feature type="sequence conflict" description="In Ref. 1; AAL55843." evidence="5" ref="1">
    <original>A</original>
    <variation>E</variation>
    <location>
        <position position="725"/>
    </location>
</feature>
<evidence type="ECO:0000250" key="1"/>
<evidence type="ECO:0000255" key="2"/>
<evidence type="ECO:0000256" key="3">
    <source>
        <dbReference type="SAM" id="MobiDB-lite"/>
    </source>
</evidence>
<evidence type="ECO:0000303" key="4">
    <source>
    </source>
</evidence>
<evidence type="ECO:0000305" key="5"/>
<proteinExistence type="evidence at protein level"/>
<sequence>MWTPGGPPGSAGWDRRRLGARLRAAFAGLQELQGLRATQQERVRGALALQPPPAPAAPCGPHGLHGPEQQLEAALAALQEQLSRLRQQDIGLKTHLDQLDLQISKLQLDVGTASGEALDSDSRPSSGFYEMSDGGSCSLSTSCASVCSDHISPSLGSLLPVAQAHKARPSMGDWRPRSVDETTVPAWRPQATEEGARPPGSVEDAGQPWGTFWPRPVSTGDLDRALPADTGLQKASADAELLGLLCQGVDIPLHVPDPKYRQDLVSQGGREVYPYPSPLHAVALQSPLFVLTKETPQRGGPSFPRESPRGPAGLNTIQTGPVLEAGPARARAYIDRLLHLWGRETPAKGSEGEQGPLRHAASPSPQRQGGWSTDGGGRLLVFAPGREDEGGPAQSRGAGRGGPQQQGYMPLEGPQQSGSLPEEGSKPSNSCVLRETMVQASPSSKAQQTPSAQDYGRGNIISPSRMLDKSPSPASGHFAHPSFAASLKMGPPKSKAEKIKRSPMDKVLRFARQPLLLLDRPEGAHAAPQPSLEWDPAHWPTGRGGLQRRPALAWEAPGRSCSESTLYPMPVLVPLAVAPQESHRTSAQALFPFEASLLTSVARRKHRRWQSTVEISARARLASCPESNLGPPRPVARRAGGPLARGRPSLVRQDAYTRSDSEPSKHSAECDPRFPSVIPETSEGESSDHTTNRFGDRESSSSDEEGGAQSRDCDLALGYVAAGHAELAWTQEAPVSSGPLLSPVPKLCRIKASKALKKKIRRFQPTALKVMTMV</sequence>
<keyword id="KW-0025">Alternative splicing</keyword>
<keyword id="KW-0175">Coiled coil</keyword>
<keyword id="KW-1267">Proteomics identification</keyword>
<keyword id="KW-1185">Reference proteome</keyword>
<accession>Q5SW24</accession>
<accession>Q2NKJ2</accession>
<accession>Q569G0</accession>
<accession>Q8WYW2</accession>
<gene>
    <name type="primary">DACT2</name>
    <name type="synonym">C6orf116</name>
    <name type="ORF">PP13671</name>
</gene>